<organism>
    <name type="scientific">Candida glabrata (strain ATCC 2001 / BCRC 20586 / JCM 3761 / NBRC 0622 / NRRL Y-65 / CBS 138)</name>
    <name type="common">Yeast</name>
    <name type="synonym">Nakaseomyces glabratus</name>
    <dbReference type="NCBI Taxonomy" id="284593"/>
    <lineage>
        <taxon>Eukaryota</taxon>
        <taxon>Fungi</taxon>
        <taxon>Dikarya</taxon>
        <taxon>Ascomycota</taxon>
        <taxon>Saccharomycotina</taxon>
        <taxon>Saccharomycetes</taxon>
        <taxon>Saccharomycetales</taxon>
        <taxon>Saccharomycetaceae</taxon>
        <taxon>Nakaseomyces</taxon>
    </lineage>
</organism>
<gene>
    <name type="primary">GWT1</name>
    <name type="ordered locus">CAGL0L03432g</name>
</gene>
<keyword id="KW-0012">Acyltransferase</keyword>
<keyword id="KW-0256">Endoplasmic reticulum</keyword>
<keyword id="KW-0325">Glycoprotein</keyword>
<keyword id="KW-0337">GPI-anchor biosynthesis</keyword>
<keyword id="KW-0472">Membrane</keyword>
<keyword id="KW-1185">Reference proteome</keyword>
<keyword id="KW-0808">Transferase</keyword>
<keyword id="KW-0812">Transmembrane</keyword>
<keyword id="KW-1133">Transmembrane helix</keyword>
<reference key="1">
    <citation type="journal article" date="2004" name="Nature">
        <title>Genome evolution in yeasts.</title>
        <authorList>
            <person name="Dujon B."/>
            <person name="Sherman D."/>
            <person name="Fischer G."/>
            <person name="Durrens P."/>
            <person name="Casaregola S."/>
            <person name="Lafontaine I."/>
            <person name="de Montigny J."/>
            <person name="Marck C."/>
            <person name="Neuveglise C."/>
            <person name="Talla E."/>
            <person name="Goffard N."/>
            <person name="Frangeul L."/>
            <person name="Aigle M."/>
            <person name="Anthouard V."/>
            <person name="Babour A."/>
            <person name="Barbe V."/>
            <person name="Barnay S."/>
            <person name="Blanchin S."/>
            <person name="Beckerich J.-M."/>
            <person name="Beyne E."/>
            <person name="Bleykasten C."/>
            <person name="Boisrame A."/>
            <person name="Boyer J."/>
            <person name="Cattolico L."/>
            <person name="Confanioleri F."/>
            <person name="de Daruvar A."/>
            <person name="Despons L."/>
            <person name="Fabre E."/>
            <person name="Fairhead C."/>
            <person name="Ferry-Dumazet H."/>
            <person name="Groppi A."/>
            <person name="Hantraye F."/>
            <person name="Hennequin C."/>
            <person name="Jauniaux N."/>
            <person name="Joyet P."/>
            <person name="Kachouri R."/>
            <person name="Kerrest A."/>
            <person name="Koszul R."/>
            <person name="Lemaire M."/>
            <person name="Lesur I."/>
            <person name="Ma L."/>
            <person name="Muller H."/>
            <person name="Nicaud J.-M."/>
            <person name="Nikolski M."/>
            <person name="Oztas S."/>
            <person name="Ozier-Kalogeropoulos O."/>
            <person name="Pellenz S."/>
            <person name="Potier S."/>
            <person name="Richard G.-F."/>
            <person name="Straub M.-L."/>
            <person name="Suleau A."/>
            <person name="Swennen D."/>
            <person name="Tekaia F."/>
            <person name="Wesolowski-Louvel M."/>
            <person name="Westhof E."/>
            <person name="Wirth B."/>
            <person name="Zeniou-Meyer M."/>
            <person name="Zivanovic Y."/>
            <person name="Bolotin-Fukuhara M."/>
            <person name="Thierry A."/>
            <person name="Bouchier C."/>
            <person name="Caudron B."/>
            <person name="Scarpelli C."/>
            <person name="Gaillardin C."/>
            <person name="Weissenbach J."/>
            <person name="Wincker P."/>
            <person name="Souciet J.-L."/>
        </authorList>
    </citation>
    <scope>NUCLEOTIDE SEQUENCE [LARGE SCALE GENOMIC DNA]</scope>
    <source>
        <strain>ATCC 2001 / BCRC 20586 / JCM 3761 / NBRC 0622 / NRRL Y-65 / CBS 138</strain>
    </source>
</reference>
<dbReference type="EC" id="2.3.-.-"/>
<dbReference type="EMBL" id="CR380958">
    <property type="protein sequence ID" value="CAG61892.1"/>
    <property type="molecule type" value="Genomic_DNA"/>
</dbReference>
<dbReference type="RefSeq" id="XP_448922.1">
    <property type="nucleotide sequence ID" value="XM_448922.1"/>
</dbReference>
<dbReference type="FunCoup" id="Q6FLH2">
    <property type="interactions" value="591"/>
</dbReference>
<dbReference type="STRING" id="284593.Q6FLH2"/>
<dbReference type="GlyCosmos" id="Q6FLH2">
    <property type="glycosylation" value="3 sites, No reported glycans"/>
</dbReference>
<dbReference type="EnsemblFungi" id="CAGL0L03432g-T">
    <property type="protein sequence ID" value="CAGL0L03432g-T-p1"/>
    <property type="gene ID" value="CAGL0L03432g"/>
</dbReference>
<dbReference type="KEGG" id="cgr:2890733"/>
<dbReference type="CGD" id="CAL0135490">
    <property type="gene designation" value="GWT1"/>
</dbReference>
<dbReference type="VEuPathDB" id="FungiDB:B1J91_L03432g"/>
<dbReference type="VEuPathDB" id="FungiDB:CAGL0L03432g"/>
<dbReference type="eggNOG" id="KOG0411">
    <property type="taxonomic scope" value="Eukaryota"/>
</dbReference>
<dbReference type="HOGENOM" id="CLU_020802_2_2_1"/>
<dbReference type="InParanoid" id="Q6FLH2"/>
<dbReference type="OMA" id="GLYVMQP"/>
<dbReference type="UniPathway" id="UPA00196"/>
<dbReference type="Proteomes" id="UP000002428">
    <property type="component" value="Chromosome L"/>
</dbReference>
<dbReference type="GO" id="GO:0005789">
    <property type="term" value="C:endoplasmic reticulum membrane"/>
    <property type="evidence" value="ECO:0007669"/>
    <property type="project" value="UniProtKB-SubCell"/>
</dbReference>
<dbReference type="GO" id="GO:0032216">
    <property type="term" value="F:glucosaminyl-phosphatidylinositol O-acyltransferase activity"/>
    <property type="evidence" value="ECO:0007669"/>
    <property type="project" value="EnsemblFungi"/>
</dbReference>
<dbReference type="GO" id="GO:0006506">
    <property type="term" value="P:GPI anchor biosynthetic process"/>
    <property type="evidence" value="ECO:0007669"/>
    <property type="project" value="UniProtKB-UniPathway"/>
</dbReference>
<dbReference type="GO" id="GO:0072659">
    <property type="term" value="P:protein localization to plasma membrane"/>
    <property type="evidence" value="ECO:0007669"/>
    <property type="project" value="TreeGrafter"/>
</dbReference>
<dbReference type="InterPro" id="IPR009447">
    <property type="entry name" value="PIGW/GWT1"/>
</dbReference>
<dbReference type="PANTHER" id="PTHR20661">
    <property type="entry name" value="PHOSPHATIDYLINOSITOL-GLYCAN BIOSYNTHESIS CLASS W PROTEIN"/>
    <property type="match status" value="1"/>
</dbReference>
<dbReference type="PANTHER" id="PTHR20661:SF0">
    <property type="entry name" value="PHOSPHATIDYLINOSITOL-GLYCAN BIOSYNTHESIS CLASS W PROTEIN"/>
    <property type="match status" value="1"/>
</dbReference>
<dbReference type="Pfam" id="PF06423">
    <property type="entry name" value="GWT1"/>
    <property type="match status" value="1"/>
</dbReference>
<dbReference type="PIRSF" id="PIRSF017321">
    <property type="entry name" value="GWT1"/>
    <property type="match status" value="1"/>
</dbReference>
<name>GWT1_CANGA</name>
<sequence length="486" mass="55102">MSSLKERKEAFVSGLEGGSILEINVVTSIALTSYLCANLISYNDTQNIPLGIDFVLNWVAMLLSFTLYSQDIYLLTTLCLIPSIGWFLLNYKRNLKQSKNTVKHTTKEAVQKFELTKKPFLTAYRSGMLILTCLAILAVDFQIFPRRFAKVETWGTSLMDLGVGSFVFSNGIVSSRGLFREKMKDKKDKASSIKKIFAATRSGTTLLILGLSRLFFVKNLEYQEHVTEYGVHWNFFITLSLLPPVLVLIDPITSYIPQCILAMLFSTVYQLFLIKDDSLLTYLVLSDRNTFINANREGLISFVGYCSIFLWGQTIGFFILGNKKTTNNLYKCSVTVSRDKKNRTLWDRLTTVGPSLGLLIWFIITYALSEGLYLIHPQTVSRRFANMPYVLWVVCYNTAFLLCYSLVDKLFGNSSNFYRISTLLEAMNCNGLAMFLISNVSTGLVNMCIPTIDQNDKVSIVILLIYAAFLAMVSFSLYKHKIFIKL</sequence>
<proteinExistence type="inferred from homology"/>
<accession>Q6FLH2</accession>
<evidence type="ECO:0000250" key="1"/>
<evidence type="ECO:0000255" key="2"/>
<evidence type="ECO:0000305" key="3"/>
<comment type="function">
    <text evidence="1">Probable acetyltransferase, which acetylates the inositol ring of phosphatidylinositol during biosynthesis of GPI-anchor.</text>
</comment>
<comment type="pathway">
    <text>Glycolipid biosynthesis; glycosylphosphatidylinositol-anchor biosynthesis.</text>
</comment>
<comment type="subcellular location">
    <subcellularLocation>
        <location evidence="1">Endoplasmic reticulum membrane</location>
        <topology evidence="1">Multi-pass membrane protein</topology>
    </subcellularLocation>
</comment>
<comment type="similarity">
    <text evidence="3">Belongs to the PIGW family.</text>
</comment>
<protein>
    <recommendedName>
        <fullName>GPI-anchored wall transfer protein 1</fullName>
        <ecNumber>2.3.-.-</ecNumber>
    </recommendedName>
</protein>
<feature type="chain" id="PRO_0000246287" description="GPI-anchored wall transfer protein 1">
    <location>
        <begin position="1"/>
        <end position="486"/>
    </location>
</feature>
<feature type="transmembrane region" description="Helical" evidence="2">
    <location>
        <begin position="20"/>
        <end position="42"/>
    </location>
</feature>
<feature type="transmembrane region" description="Helical" evidence="2">
    <location>
        <begin position="48"/>
        <end position="68"/>
    </location>
</feature>
<feature type="transmembrane region" description="Helical" evidence="2">
    <location>
        <begin position="71"/>
        <end position="91"/>
    </location>
</feature>
<feature type="transmembrane region" description="Helical" evidence="2">
    <location>
        <begin position="119"/>
        <end position="139"/>
    </location>
</feature>
<feature type="transmembrane region" description="Helical" evidence="2">
    <location>
        <begin position="153"/>
        <end position="173"/>
    </location>
</feature>
<feature type="transmembrane region" description="Helical" evidence="2">
    <location>
        <begin position="197"/>
        <end position="216"/>
    </location>
</feature>
<feature type="transmembrane region" description="Helical" evidence="2">
    <location>
        <begin position="229"/>
        <end position="249"/>
    </location>
</feature>
<feature type="transmembrane region" description="Helical" evidence="2">
    <location>
        <begin position="254"/>
        <end position="274"/>
    </location>
</feature>
<feature type="transmembrane region" description="Helical" evidence="2">
    <location>
        <begin position="299"/>
        <end position="319"/>
    </location>
</feature>
<feature type="transmembrane region" description="Helical" evidence="2">
    <location>
        <begin position="355"/>
        <end position="375"/>
    </location>
</feature>
<feature type="transmembrane region" description="Helical" evidence="2">
    <location>
        <begin position="387"/>
        <end position="407"/>
    </location>
</feature>
<feature type="transmembrane region" description="Helical" evidence="2">
    <location>
        <begin position="432"/>
        <end position="452"/>
    </location>
</feature>
<feature type="transmembrane region" description="Helical" evidence="2">
    <location>
        <begin position="458"/>
        <end position="478"/>
    </location>
</feature>
<feature type="glycosylation site" description="N-linked (GlcNAc...) asparagine" evidence="2">
    <location>
        <position position="43"/>
    </location>
</feature>
<feature type="glycosylation site" description="N-linked (GlcNAc...) asparagine" evidence="2">
    <location>
        <position position="342"/>
    </location>
</feature>
<feature type="glycosylation site" description="N-linked (GlcNAc...) asparagine" evidence="2">
    <location>
        <position position="413"/>
    </location>
</feature>